<comment type="function">
    <text evidence="3 4">Part of the ABC transporter complex OppABCDF involved in the uptake of oligopeptides (PubMed:8244921). Probably responsible for energy coupling to the transport system (Probable). Essential for uptake of peptides larger than three amino acids and for growth in milk (PubMed:8244921).</text>
</comment>
<comment type="catalytic activity">
    <reaction evidence="5">
        <text>a [peptide](out) + ATP + H2O = a [peptide](in) + ADP + phosphate + H(+)</text>
        <dbReference type="Rhea" id="RHEA:78459"/>
        <dbReference type="Rhea" id="RHEA-COMP:19083"/>
        <dbReference type="ChEBI" id="CHEBI:15377"/>
        <dbReference type="ChEBI" id="CHEBI:15378"/>
        <dbReference type="ChEBI" id="CHEBI:30616"/>
        <dbReference type="ChEBI" id="CHEBI:33710"/>
        <dbReference type="ChEBI" id="CHEBI:43474"/>
        <dbReference type="ChEBI" id="CHEBI:456216"/>
        <dbReference type="EC" id="7.4.2.6"/>
    </reaction>
    <physiologicalReaction direction="left-to-right" evidence="5">
        <dbReference type="Rhea" id="RHEA:78460"/>
    </physiologicalReaction>
</comment>
<comment type="subunit">
    <text evidence="5">The complex is composed of two ATP-binding proteins (OppD and OppF), two transmembrane proteins (OppB and OppC) and a solute-binding protein (OppA).</text>
</comment>
<comment type="subcellular location">
    <subcellularLocation>
        <location evidence="1">Cell membrane</location>
        <topology evidence="1">Peripheral membrane protein</topology>
    </subcellularLocation>
</comment>
<comment type="similarity">
    <text evidence="4">Belongs to the ABC transporter superfamily.</text>
</comment>
<keyword id="KW-0067">ATP-binding</keyword>
<keyword id="KW-1003">Cell membrane</keyword>
<keyword id="KW-0472">Membrane</keyword>
<keyword id="KW-0547">Nucleotide-binding</keyword>
<keyword id="KW-0571">Peptide transport</keyword>
<keyword id="KW-0653">Protein transport</keyword>
<keyword id="KW-1185">Reference proteome</keyword>
<keyword id="KW-1278">Translocase</keyword>
<keyword id="KW-0813">Transport</keyword>
<organism>
    <name type="scientific">Lactococcus lactis subsp. lactis (strain IL1403)</name>
    <name type="common">Streptococcus lactis</name>
    <dbReference type="NCBI Taxonomy" id="272623"/>
    <lineage>
        <taxon>Bacteria</taxon>
        <taxon>Bacillati</taxon>
        <taxon>Bacillota</taxon>
        <taxon>Bacilli</taxon>
        <taxon>Lactobacillales</taxon>
        <taxon>Streptococcaceae</taxon>
        <taxon>Lactococcus</taxon>
    </lineage>
</organism>
<feature type="chain" id="PRO_0000092654" description="Oligopeptide transport ATP-binding protein OppD">
    <location>
        <begin position="1"/>
        <end position="338"/>
    </location>
</feature>
<feature type="domain" description="ABC transporter" evidence="2">
    <location>
        <begin position="7"/>
        <end position="257"/>
    </location>
</feature>
<feature type="binding site" evidence="2">
    <location>
        <begin position="43"/>
        <end position="50"/>
    </location>
    <ligand>
        <name>ATP</name>
        <dbReference type="ChEBI" id="CHEBI:30616"/>
    </ligand>
</feature>
<feature type="sequence conflict" description="In Ref. 1; AAA16163." evidence="4" ref="1">
    <original>R</original>
    <variation>K</variation>
    <location>
        <position position="34"/>
    </location>
</feature>
<feature type="sequence conflict" description="In Ref. 1; AAA16163." evidence="4" ref="1">
    <original>E</original>
    <variation>D</variation>
    <location>
        <position position="75"/>
    </location>
</feature>
<feature type="sequence conflict" description="In Ref. 1; AAA16163." evidence="4" ref="1">
    <original>A</original>
    <variation>T</variation>
    <location>
        <position position="239"/>
    </location>
</feature>
<feature type="sequence conflict" description="In Ref. 1; AAA16163." evidence="4" ref="1">
    <original>E</original>
    <variation>K</variation>
    <location>
        <position position="282"/>
    </location>
</feature>
<feature type="sequence conflict" description="In Ref. 1; AAA16163." evidence="4" ref="1">
    <original>K</original>
    <variation>E</variation>
    <location>
        <position position="337"/>
    </location>
</feature>
<name>OPPD_LACLA</name>
<dbReference type="EC" id="7.4.2.6" evidence="5"/>
<dbReference type="EMBL" id="L18760">
    <property type="protein sequence ID" value="AAA16163.1"/>
    <property type="molecule type" value="Unassigned_DNA"/>
</dbReference>
<dbReference type="EMBL" id="AE005176">
    <property type="protein sequence ID" value="AAK05939.1"/>
    <property type="molecule type" value="Genomic_DNA"/>
</dbReference>
<dbReference type="PIR" id="A53290">
    <property type="entry name" value="A53290"/>
</dbReference>
<dbReference type="PIR" id="A86855">
    <property type="entry name" value="A86855"/>
</dbReference>
<dbReference type="RefSeq" id="NP_267998.1">
    <property type="nucleotide sequence ID" value="NC_002662.1"/>
</dbReference>
<dbReference type="RefSeq" id="WP_010906165.1">
    <property type="nucleotide sequence ID" value="NC_002662.1"/>
</dbReference>
<dbReference type="SMR" id="Q07733"/>
<dbReference type="TCDB" id="3.A.1.5.10">
    <property type="family name" value="the atp-binding cassette (abc) superfamily"/>
</dbReference>
<dbReference type="PaxDb" id="272623-L93148"/>
<dbReference type="EnsemblBacteria" id="AAK05939">
    <property type="protein sequence ID" value="AAK05939"/>
    <property type="gene ID" value="L93148"/>
</dbReference>
<dbReference type="KEGG" id="lla:L93148"/>
<dbReference type="PATRIC" id="fig|272623.7.peg.1972"/>
<dbReference type="eggNOG" id="COG0444">
    <property type="taxonomic scope" value="Bacteria"/>
</dbReference>
<dbReference type="HOGENOM" id="CLU_000604_1_23_9"/>
<dbReference type="OrthoDB" id="9802264at2"/>
<dbReference type="Proteomes" id="UP000002196">
    <property type="component" value="Chromosome"/>
</dbReference>
<dbReference type="GO" id="GO:0005886">
    <property type="term" value="C:plasma membrane"/>
    <property type="evidence" value="ECO:0007669"/>
    <property type="project" value="UniProtKB-SubCell"/>
</dbReference>
<dbReference type="GO" id="GO:0005524">
    <property type="term" value="F:ATP binding"/>
    <property type="evidence" value="ECO:0007669"/>
    <property type="project" value="UniProtKB-KW"/>
</dbReference>
<dbReference type="GO" id="GO:0016887">
    <property type="term" value="F:ATP hydrolysis activity"/>
    <property type="evidence" value="ECO:0007669"/>
    <property type="project" value="InterPro"/>
</dbReference>
<dbReference type="GO" id="GO:0015833">
    <property type="term" value="P:peptide transport"/>
    <property type="evidence" value="ECO:0007669"/>
    <property type="project" value="UniProtKB-KW"/>
</dbReference>
<dbReference type="GO" id="GO:0015031">
    <property type="term" value="P:protein transport"/>
    <property type="evidence" value="ECO:0007669"/>
    <property type="project" value="UniProtKB-KW"/>
</dbReference>
<dbReference type="CDD" id="cd03257">
    <property type="entry name" value="ABC_NikE_OppD_transporters"/>
    <property type="match status" value="1"/>
</dbReference>
<dbReference type="FunFam" id="3.40.50.300:FF:000016">
    <property type="entry name" value="Oligopeptide ABC transporter ATP-binding component"/>
    <property type="match status" value="1"/>
</dbReference>
<dbReference type="Gene3D" id="3.40.50.300">
    <property type="entry name" value="P-loop containing nucleotide triphosphate hydrolases"/>
    <property type="match status" value="1"/>
</dbReference>
<dbReference type="InterPro" id="IPR003593">
    <property type="entry name" value="AAA+_ATPase"/>
</dbReference>
<dbReference type="InterPro" id="IPR050388">
    <property type="entry name" value="ABC_Ni/Peptide_Import"/>
</dbReference>
<dbReference type="InterPro" id="IPR003439">
    <property type="entry name" value="ABC_transporter-like_ATP-bd"/>
</dbReference>
<dbReference type="InterPro" id="IPR017871">
    <property type="entry name" value="ABC_transporter-like_CS"/>
</dbReference>
<dbReference type="InterPro" id="IPR013563">
    <property type="entry name" value="Oligopep_ABC_C"/>
</dbReference>
<dbReference type="InterPro" id="IPR027417">
    <property type="entry name" value="P-loop_NTPase"/>
</dbReference>
<dbReference type="NCBIfam" id="TIGR01727">
    <property type="entry name" value="oligo_HPY"/>
    <property type="match status" value="1"/>
</dbReference>
<dbReference type="PANTHER" id="PTHR43297:SF2">
    <property type="entry name" value="DIPEPTIDE TRANSPORT ATP-BINDING PROTEIN DPPD"/>
    <property type="match status" value="1"/>
</dbReference>
<dbReference type="PANTHER" id="PTHR43297">
    <property type="entry name" value="OLIGOPEPTIDE TRANSPORT ATP-BINDING PROTEIN APPD"/>
    <property type="match status" value="1"/>
</dbReference>
<dbReference type="Pfam" id="PF00005">
    <property type="entry name" value="ABC_tran"/>
    <property type="match status" value="1"/>
</dbReference>
<dbReference type="Pfam" id="PF08352">
    <property type="entry name" value="oligo_HPY"/>
    <property type="match status" value="1"/>
</dbReference>
<dbReference type="SMART" id="SM00382">
    <property type="entry name" value="AAA"/>
    <property type="match status" value="1"/>
</dbReference>
<dbReference type="SUPFAM" id="SSF52540">
    <property type="entry name" value="P-loop containing nucleoside triphosphate hydrolases"/>
    <property type="match status" value="1"/>
</dbReference>
<dbReference type="PROSITE" id="PS00211">
    <property type="entry name" value="ABC_TRANSPORTER_1"/>
    <property type="match status" value="1"/>
</dbReference>
<dbReference type="PROSITE" id="PS50893">
    <property type="entry name" value="ABC_TRANSPORTER_2"/>
    <property type="match status" value="1"/>
</dbReference>
<evidence type="ECO:0000250" key="1">
    <source>
        <dbReference type="UniProtKB" id="P24136"/>
    </source>
</evidence>
<evidence type="ECO:0000255" key="2">
    <source>
        <dbReference type="PROSITE-ProRule" id="PRU00434"/>
    </source>
</evidence>
<evidence type="ECO:0000269" key="3">
    <source>
    </source>
</evidence>
<evidence type="ECO:0000305" key="4"/>
<evidence type="ECO:0000305" key="5">
    <source>
    </source>
</evidence>
<proteinExistence type="evidence at protein level"/>
<reference key="1">
    <citation type="journal article" date="1993" name="J. Bacteriol.">
        <title>Genetic and biochemical characterization of the oligopeptide transport system of Lactococcus lactis.</title>
        <authorList>
            <person name="Tynkkynen S."/>
            <person name="Buist G."/>
            <person name="Kunji E."/>
            <person name="Kok J."/>
            <person name="Poolman B."/>
            <person name="Venema G."/>
            <person name="Haandrikman A."/>
        </authorList>
    </citation>
    <scope>NUCLEOTIDE SEQUENCE [GENOMIC DNA]</scope>
    <scope>FUNCTION</scope>
    <scope>SUBUNIT</scope>
    <source>
        <strain>SSL135</strain>
    </source>
</reference>
<reference key="2">
    <citation type="journal article" date="2001" name="Genome Res.">
        <title>The complete genome sequence of the lactic acid bacterium Lactococcus lactis ssp. lactis IL1403.</title>
        <authorList>
            <person name="Bolotin A."/>
            <person name="Wincker P."/>
            <person name="Mauger S."/>
            <person name="Jaillon O."/>
            <person name="Malarme K."/>
            <person name="Weissenbach J."/>
            <person name="Ehrlich S.D."/>
            <person name="Sorokin A."/>
        </authorList>
    </citation>
    <scope>NUCLEOTIDE SEQUENCE [LARGE SCALE GENOMIC DNA]</scope>
    <source>
        <strain>IL1403</strain>
    </source>
</reference>
<gene>
    <name type="primary">oppD</name>
    <name type="ordered locus">LL1841</name>
    <name type="ORF">L93148</name>
</gene>
<sequence>MESENILEAKQVSVAFRIAGKFQKAIYDIDLSLRRGEVLAIVGESGSGKSTFATAVMGLHNPNQTQITGSILLDEEEVIGKTGDSMASIRGSKVGMIFQNPLTALNPLMKIGQQIKEMLAVHDVYPENQYESRIFQLLEQVGIPNPKRVVNQFPHQLSGGMRQRVMIAIAIANDPDLIIADEPTTALDVTIQAQILDLILEIQKKKNAGVILITHDLGVVAEVADTVAVMYAGQLVEKASVEELFQNPKHPYTRSLLRSNPSAETVSDDLYVIPGSVPSLSEIEYDKDLFLARVPWMKEEAQKVISEKMTEISSNHFVRGQAWKKFEFPDQKLKGGKK</sequence>
<accession>Q07733</accession>
<protein>
    <recommendedName>
        <fullName evidence="4">Oligopeptide transport ATP-binding protein OppD</fullName>
        <ecNumber evidence="5">7.4.2.6</ecNumber>
    </recommendedName>
</protein>